<reference key="1">
    <citation type="journal article" date="2001" name="Mol. Biol. Cell">
        <title>The Schizosaccharomyces pombe spo20(+) gene encoding a homologue of Saccharomyces cerevisiae Sec14 plays an important role in forespore membrane formation.</title>
        <authorList>
            <person name="Nakase Y."/>
            <person name="Nakamura T."/>
            <person name="Hirata A."/>
            <person name="Routt S.M."/>
            <person name="Skinner H.B."/>
            <person name="Bankaitis V.A."/>
            <person name="Shimoda C."/>
        </authorList>
    </citation>
    <scope>NUCLEOTIDE SEQUENCE [GENOMIC DNA]</scope>
    <scope>FUNCTION</scope>
    <scope>SUBCELLULAR LOCATION</scope>
</reference>
<reference key="2">
    <citation type="journal article" date="2002" name="Nature">
        <title>The genome sequence of Schizosaccharomyces pombe.</title>
        <authorList>
            <person name="Wood V."/>
            <person name="Gwilliam R."/>
            <person name="Rajandream M.A."/>
            <person name="Lyne M.H."/>
            <person name="Lyne R."/>
            <person name="Stewart A."/>
            <person name="Sgouros J.G."/>
            <person name="Peat N."/>
            <person name="Hayles J."/>
            <person name="Baker S.G."/>
            <person name="Basham D."/>
            <person name="Bowman S."/>
            <person name="Brooks K."/>
            <person name="Brown D."/>
            <person name="Brown S."/>
            <person name="Chillingworth T."/>
            <person name="Churcher C.M."/>
            <person name="Collins M."/>
            <person name="Connor R."/>
            <person name="Cronin A."/>
            <person name="Davis P."/>
            <person name="Feltwell T."/>
            <person name="Fraser A."/>
            <person name="Gentles S."/>
            <person name="Goble A."/>
            <person name="Hamlin N."/>
            <person name="Harris D.E."/>
            <person name="Hidalgo J."/>
            <person name="Hodgson G."/>
            <person name="Holroyd S."/>
            <person name="Hornsby T."/>
            <person name="Howarth S."/>
            <person name="Huckle E.J."/>
            <person name="Hunt S."/>
            <person name="Jagels K."/>
            <person name="James K.D."/>
            <person name="Jones L."/>
            <person name="Jones M."/>
            <person name="Leather S."/>
            <person name="McDonald S."/>
            <person name="McLean J."/>
            <person name="Mooney P."/>
            <person name="Moule S."/>
            <person name="Mungall K.L."/>
            <person name="Murphy L.D."/>
            <person name="Niblett D."/>
            <person name="Odell C."/>
            <person name="Oliver K."/>
            <person name="O'Neil S."/>
            <person name="Pearson D."/>
            <person name="Quail M.A."/>
            <person name="Rabbinowitsch E."/>
            <person name="Rutherford K.M."/>
            <person name="Rutter S."/>
            <person name="Saunders D."/>
            <person name="Seeger K."/>
            <person name="Sharp S."/>
            <person name="Skelton J."/>
            <person name="Simmonds M.N."/>
            <person name="Squares R."/>
            <person name="Squares S."/>
            <person name="Stevens K."/>
            <person name="Taylor K."/>
            <person name="Taylor R.G."/>
            <person name="Tivey A."/>
            <person name="Walsh S.V."/>
            <person name="Warren T."/>
            <person name="Whitehead S."/>
            <person name="Woodward J.R."/>
            <person name="Volckaert G."/>
            <person name="Aert R."/>
            <person name="Robben J."/>
            <person name="Grymonprez B."/>
            <person name="Weltjens I."/>
            <person name="Vanstreels E."/>
            <person name="Rieger M."/>
            <person name="Schaefer M."/>
            <person name="Mueller-Auer S."/>
            <person name="Gabel C."/>
            <person name="Fuchs M."/>
            <person name="Duesterhoeft A."/>
            <person name="Fritzc C."/>
            <person name="Holzer E."/>
            <person name="Moestl D."/>
            <person name="Hilbert H."/>
            <person name="Borzym K."/>
            <person name="Langer I."/>
            <person name="Beck A."/>
            <person name="Lehrach H."/>
            <person name="Reinhardt R."/>
            <person name="Pohl T.M."/>
            <person name="Eger P."/>
            <person name="Zimmermann W."/>
            <person name="Wedler H."/>
            <person name="Wambutt R."/>
            <person name="Purnelle B."/>
            <person name="Goffeau A."/>
            <person name="Cadieu E."/>
            <person name="Dreano S."/>
            <person name="Gloux S."/>
            <person name="Lelaure V."/>
            <person name="Mottier S."/>
            <person name="Galibert F."/>
            <person name="Aves S.J."/>
            <person name="Xiang Z."/>
            <person name="Hunt C."/>
            <person name="Moore K."/>
            <person name="Hurst S.M."/>
            <person name="Lucas M."/>
            <person name="Rochet M."/>
            <person name="Gaillardin C."/>
            <person name="Tallada V.A."/>
            <person name="Garzon A."/>
            <person name="Thode G."/>
            <person name="Daga R.R."/>
            <person name="Cruzado L."/>
            <person name="Jimenez J."/>
            <person name="Sanchez M."/>
            <person name="del Rey F."/>
            <person name="Benito J."/>
            <person name="Dominguez A."/>
            <person name="Revuelta J.L."/>
            <person name="Moreno S."/>
            <person name="Armstrong J."/>
            <person name="Forsburg S.L."/>
            <person name="Cerutti L."/>
            <person name="Lowe T."/>
            <person name="McCombie W.R."/>
            <person name="Paulsen I."/>
            <person name="Potashkin J."/>
            <person name="Shpakovski G.V."/>
            <person name="Ussery D."/>
            <person name="Barrell B.G."/>
            <person name="Nurse P."/>
        </authorList>
    </citation>
    <scope>NUCLEOTIDE SEQUENCE [LARGE SCALE GENOMIC DNA]</scope>
    <source>
        <strain>972 / ATCC 24843</strain>
    </source>
</reference>
<proteinExistence type="predicted"/>
<comment type="function">
    <text evidence="3">Required for transport of secretory proteins from the Golgi complex. Catalyzes the transfer of phosphatidylinositol and phosphatidylcholine between membranes in vitro. Essential for viability and secretion.</text>
</comment>
<comment type="function">
    <text evidence="3">Has a direct role in controlling cell septation and in forespore membrane formation.</text>
</comment>
<comment type="subcellular location">
    <subcellularLocation>
        <location evidence="3">Nucleus</location>
    </subcellularLocation>
    <subcellularLocation>
        <location evidence="3">Prospore membrane</location>
    </subcellularLocation>
    <text>Nuclear, during meiosis. Associated with the forespore membrane during sporulation. During interphase found at the cell poles and during M-phase is located at both the cell poles and the medial region.</text>
</comment>
<name>SEC14_SCHPO</name>
<dbReference type="EMBL" id="CU329670">
    <property type="protein sequence ID" value="CAA93167.1"/>
    <property type="molecule type" value="Genomic_DNA"/>
</dbReference>
<dbReference type="PIR" id="T38768">
    <property type="entry name" value="T38768"/>
</dbReference>
<dbReference type="RefSeq" id="NP_593003.1">
    <property type="nucleotide sequence ID" value="NM_001018402.2"/>
</dbReference>
<dbReference type="SMR" id="Q10137"/>
<dbReference type="BioGRID" id="280042">
    <property type="interactions" value="63"/>
</dbReference>
<dbReference type="FunCoup" id="Q10137">
    <property type="interactions" value="54"/>
</dbReference>
<dbReference type="STRING" id="284812.Q10137"/>
<dbReference type="iPTMnet" id="Q10137"/>
<dbReference type="PaxDb" id="4896-SPAC3H8.10.1"/>
<dbReference type="EnsemblFungi" id="SPAC3H8.10.1">
    <property type="protein sequence ID" value="SPAC3H8.10.1:pep"/>
    <property type="gene ID" value="SPAC3H8.10"/>
</dbReference>
<dbReference type="GeneID" id="2543628"/>
<dbReference type="KEGG" id="spo:2543628"/>
<dbReference type="PomBase" id="SPAC3H8.10"/>
<dbReference type="VEuPathDB" id="FungiDB:SPAC3H8.10"/>
<dbReference type="eggNOG" id="KOG1471">
    <property type="taxonomic scope" value="Eukaryota"/>
</dbReference>
<dbReference type="HOGENOM" id="CLU_014001_0_1_1"/>
<dbReference type="InParanoid" id="Q10137"/>
<dbReference type="OMA" id="FQYYPQY"/>
<dbReference type="PhylomeDB" id="Q10137"/>
<dbReference type="PRO" id="PR:Q10137"/>
<dbReference type="Proteomes" id="UP000002485">
    <property type="component" value="Chromosome I"/>
</dbReference>
<dbReference type="GO" id="GO:0032153">
    <property type="term" value="C:cell division site"/>
    <property type="evidence" value="ECO:0000314"/>
    <property type="project" value="PomBase"/>
</dbReference>
<dbReference type="GO" id="GO:0051286">
    <property type="term" value="C:cell tip"/>
    <property type="evidence" value="ECO:0000314"/>
    <property type="project" value="PomBase"/>
</dbReference>
<dbReference type="GO" id="GO:0005634">
    <property type="term" value="C:nucleus"/>
    <property type="evidence" value="ECO:0000314"/>
    <property type="project" value="PomBase"/>
</dbReference>
<dbReference type="GO" id="GO:0005628">
    <property type="term" value="C:prospore membrane"/>
    <property type="evidence" value="ECO:0000314"/>
    <property type="project" value="PomBase"/>
</dbReference>
<dbReference type="GO" id="GO:0120019">
    <property type="term" value="F:phosphatidylcholine transfer activity"/>
    <property type="evidence" value="ECO:0000314"/>
    <property type="project" value="PomBase"/>
</dbReference>
<dbReference type="GO" id="GO:0008526">
    <property type="term" value="F:phosphatidylinositol transfer activity"/>
    <property type="evidence" value="ECO:0000314"/>
    <property type="project" value="PomBase"/>
</dbReference>
<dbReference type="GO" id="GO:0032120">
    <property type="term" value="P:ascospore-type prospore membrane formation"/>
    <property type="evidence" value="ECO:0000315"/>
    <property type="project" value="PomBase"/>
</dbReference>
<dbReference type="GO" id="GO:0031322">
    <property type="term" value="P:ascospore-type prospore-specific spindle pole body remodeling"/>
    <property type="evidence" value="ECO:0000315"/>
    <property type="project" value="PomBase"/>
</dbReference>
<dbReference type="GO" id="GO:0120010">
    <property type="term" value="P:intermembrane phospholipid transfer"/>
    <property type="evidence" value="ECO:0000315"/>
    <property type="project" value="PomBase"/>
</dbReference>
<dbReference type="GO" id="GO:0006892">
    <property type="term" value="P:post-Golgi vesicle-mediated transport"/>
    <property type="evidence" value="ECO:0000315"/>
    <property type="project" value="PomBase"/>
</dbReference>
<dbReference type="GO" id="GO:0015031">
    <property type="term" value="P:protein transport"/>
    <property type="evidence" value="ECO:0007669"/>
    <property type="project" value="UniProtKB-KW"/>
</dbReference>
<dbReference type="CDD" id="cd00170">
    <property type="entry name" value="SEC14"/>
    <property type="match status" value="1"/>
</dbReference>
<dbReference type="Gene3D" id="3.40.525.10">
    <property type="entry name" value="CRAL-TRIO lipid binding domain"/>
    <property type="match status" value="1"/>
</dbReference>
<dbReference type="Gene3D" id="1.10.8.20">
    <property type="entry name" value="N-terminal domain of phosphatidylinositol transfer protein sec14p"/>
    <property type="match status" value="1"/>
</dbReference>
<dbReference type="InterPro" id="IPR001251">
    <property type="entry name" value="CRAL-TRIO_dom"/>
</dbReference>
<dbReference type="InterPro" id="IPR036865">
    <property type="entry name" value="CRAL-TRIO_dom_sf"/>
</dbReference>
<dbReference type="InterPro" id="IPR011074">
    <property type="entry name" value="CRAL/TRIO_N_dom"/>
</dbReference>
<dbReference type="InterPro" id="IPR036273">
    <property type="entry name" value="CRAL/TRIO_N_dom_sf"/>
</dbReference>
<dbReference type="InterPro" id="IPR051026">
    <property type="entry name" value="PI/PC_transfer"/>
</dbReference>
<dbReference type="PANTHER" id="PTHR45657">
    <property type="entry name" value="CRAL-TRIO DOMAIN-CONTAINING PROTEIN YKL091C-RELATED"/>
    <property type="match status" value="1"/>
</dbReference>
<dbReference type="PANTHER" id="PTHR45657:SF1">
    <property type="entry name" value="CRAL-TRIO DOMAIN-CONTAINING PROTEIN YKL091C-RELATED"/>
    <property type="match status" value="1"/>
</dbReference>
<dbReference type="Pfam" id="PF00650">
    <property type="entry name" value="CRAL_TRIO"/>
    <property type="match status" value="1"/>
</dbReference>
<dbReference type="Pfam" id="PF03765">
    <property type="entry name" value="CRAL_TRIO_N"/>
    <property type="match status" value="1"/>
</dbReference>
<dbReference type="PRINTS" id="PR00180">
    <property type="entry name" value="CRETINALDHBP"/>
</dbReference>
<dbReference type="SMART" id="SM01100">
    <property type="entry name" value="CRAL_TRIO_N"/>
    <property type="match status" value="1"/>
</dbReference>
<dbReference type="SMART" id="SM00516">
    <property type="entry name" value="SEC14"/>
    <property type="match status" value="1"/>
</dbReference>
<dbReference type="SUPFAM" id="SSF52087">
    <property type="entry name" value="CRAL/TRIO domain"/>
    <property type="match status" value="1"/>
</dbReference>
<dbReference type="SUPFAM" id="SSF46938">
    <property type="entry name" value="CRAL/TRIO N-terminal domain"/>
    <property type="match status" value="1"/>
</dbReference>
<dbReference type="PROSITE" id="PS50191">
    <property type="entry name" value="CRAL_TRIO"/>
    <property type="match status" value="1"/>
</dbReference>
<evidence type="ECO:0000255" key="1">
    <source>
        <dbReference type="PROSITE-ProRule" id="PRU00056"/>
    </source>
</evidence>
<evidence type="ECO:0000256" key="2">
    <source>
        <dbReference type="SAM" id="MobiDB-lite"/>
    </source>
</evidence>
<evidence type="ECO:0000269" key="3">
    <source>
    </source>
</evidence>
<feature type="chain" id="PRO_0000210742" description="Sec14 cytosolic factor">
    <location>
        <begin position="1"/>
        <end position="286"/>
    </location>
</feature>
<feature type="domain" description="CRAL-TRIO" evidence="1">
    <location>
        <begin position="94"/>
        <end position="267"/>
    </location>
</feature>
<feature type="region of interest" description="Disordered" evidence="2">
    <location>
        <begin position="1"/>
        <end position="24"/>
    </location>
</feature>
<accession>Q10137</accession>
<organism>
    <name type="scientific">Schizosaccharomyces pombe (strain 972 / ATCC 24843)</name>
    <name type="common">Fission yeast</name>
    <dbReference type="NCBI Taxonomy" id="284812"/>
    <lineage>
        <taxon>Eukaryota</taxon>
        <taxon>Fungi</taxon>
        <taxon>Dikarya</taxon>
        <taxon>Ascomycota</taxon>
        <taxon>Taphrinomycotina</taxon>
        <taxon>Schizosaccharomycetes</taxon>
        <taxon>Schizosaccharomycetales</taxon>
        <taxon>Schizosaccharomycetaceae</taxon>
        <taxon>Schizosaccharomyces</taxon>
    </lineage>
</organism>
<keyword id="KW-0472">Membrane</keyword>
<keyword id="KW-0539">Nucleus</keyword>
<keyword id="KW-0653">Protein transport</keyword>
<keyword id="KW-1185">Reference proteome</keyword>
<keyword id="KW-0813">Transport</keyword>
<sequence>MSETISDPYPLTNPNAPLGHPGHLNSTQQATLDSMRLELQKLGYTERLDDATLLRFLRARKFNLQQSLEMFIKCEKWRKEFGVDDLIKNFHYDEKEAVSKYYPQFYHKTDIDGRPVYVEQLGNIDLKKLYQITTPERMMQNLVYEYEMLALKRFPACSRKAGGLIETSCTIMDLKGVGITSIHSVYSYIRQASSISQDYYPERMGKFYVINAPWGFSSAFNLIKGFLDEATVKKIHILGSNYKSALLEQIPADNLPAKLGGNCQCPGGCELSDAGPWHEEQWMNKN</sequence>
<protein>
    <recommendedName>
        <fullName>Sec14 cytosolic factor</fullName>
    </recommendedName>
    <alternativeName>
        <fullName>Phosphatidylinositol/phosphatidyl-choline transfer protein</fullName>
        <shortName>PI/PC TP</shortName>
    </alternativeName>
    <alternativeName>
        <fullName>Sporulation-specific protein 20</fullName>
    </alternativeName>
</protein>
<gene>
    <name type="primary">sec14</name>
    <name type="synonym">spo20</name>
    <name type="ORF">SPAC3H8.10</name>
</gene>